<name>COX1_TINMA</name>
<reference key="1">
    <citation type="book" date="1997" name="Avian molecular evolution and systematics">
        <title>Phylogenetic relationships of the ratite birds: resolving conflicts between molecular and morphological data sets.</title>
        <editorList>
            <person name="Mindell D.P."/>
        </editorList>
        <authorList>
            <person name="Lee K."/>
            <person name="Feinstein J."/>
            <person name="Cracraft J."/>
        </authorList>
    </citation>
    <scope>NUCLEOTIDE SEQUENCE [GENOMIC DNA]</scope>
</reference>
<feature type="chain" id="PRO_0000183426" description="Cytochrome c oxidase subunit 1">
    <location>
        <begin position="1"/>
        <end position="337" status="greater than"/>
    </location>
</feature>
<feature type="topological domain" description="Mitochondrial matrix" evidence="2">
    <location>
        <begin position="1"/>
        <end position="12"/>
    </location>
</feature>
<feature type="transmembrane region" description="Helical; Name=I" evidence="2">
    <location>
        <begin position="13"/>
        <end position="41"/>
    </location>
</feature>
<feature type="topological domain" description="Mitochondrial intermembrane" evidence="2">
    <location>
        <begin position="42"/>
        <end position="51"/>
    </location>
</feature>
<feature type="transmembrane region" description="Helical; Name=II" evidence="2">
    <location>
        <begin position="52"/>
        <end position="87"/>
    </location>
</feature>
<feature type="topological domain" description="Mitochondrial matrix" evidence="2">
    <location>
        <begin position="88"/>
        <end position="95"/>
    </location>
</feature>
<feature type="transmembrane region" description="Helical; Name=III" evidence="2">
    <location>
        <begin position="96"/>
        <end position="118"/>
    </location>
</feature>
<feature type="topological domain" description="Mitochondrial intermembrane" evidence="2">
    <location>
        <begin position="119"/>
        <end position="141"/>
    </location>
</feature>
<feature type="transmembrane region" description="Helical; Name=IV" evidence="2">
    <location>
        <begin position="142"/>
        <end position="171"/>
    </location>
</feature>
<feature type="topological domain" description="Mitochondrial matrix" evidence="2">
    <location>
        <begin position="172"/>
        <end position="183"/>
    </location>
</feature>
<feature type="transmembrane region" description="Helical; Name=V" evidence="2">
    <location>
        <begin position="184"/>
        <end position="213"/>
    </location>
</feature>
<feature type="topological domain" description="Mitochondrial intermembrane" evidence="2">
    <location>
        <begin position="214"/>
        <end position="228"/>
    </location>
</feature>
<feature type="transmembrane region" description="Helical; Name=VI" evidence="2">
    <location>
        <begin position="229"/>
        <end position="262"/>
    </location>
</feature>
<feature type="topological domain" description="Mitochondrial matrix" evidence="2">
    <location>
        <begin position="263"/>
        <end position="270"/>
    </location>
</feature>
<feature type="transmembrane region" description="Helical; Name=VII" evidence="2">
    <location>
        <begin position="271"/>
        <end position="287"/>
    </location>
</feature>
<feature type="topological domain" description="Mitochondrial intermembrane" evidence="2">
    <location>
        <begin position="288"/>
        <end position="299"/>
    </location>
</feature>
<feature type="transmembrane region" description="Helical; Name=VIII" evidence="2">
    <location>
        <begin position="300"/>
        <end position="328"/>
    </location>
</feature>
<feature type="topological domain" description="Mitochondrial matrix" evidence="2">
    <location>
        <begin position="329"/>
        <end position="337" status="greater than"/>
    </location>
</feature>
<feature type="binding site" evidence="2">
    <location>
        <position position="41"/>
    </location>
    <ligand>
        <name>Na(+)</name>
        <dbReference type="ChEBI" id="CHEBI:29101"/>
    </ligand>
</feature>
<feature type="binding site" evidence="2">
    <location>
        <position position="46"/>
    </location>
    <ligand>
        <name>Na(+)</name>
        <dbReference type="ChEBI" id="CHEBI:29101"/>
    </ligand>
</feature>
<feature type="binding site" description="axial binding residue" evidence="2">
    <location>
        <position position="62"/>
    </location>
    <ligand>
        <name>Fe(II)-heme a</name>
        <dbReference type="ChEBI" id="CHEBI:61715"/>
        <note>low-spin</note>
    </ligand>
    <ligandPart>
        <name>Fe</name>
        <dbReference type="ChEBI" id="CHEBI:18248"/>
    </ligandPart>
</feature>
<feature type="binding site" evidence="2">
    <location>
        <position position="241"/>
    </location>
    <ligand>
        <name>Cu cation</name>
        <dbReference type="ChEBI" id="CHEBI:23378"/>
        <label>B</label>
    </ligand>
</feature>
<feature type="binding site" evidence="2">
    <location>
        <position position="245"/>
    </location>
    <ligand>
        <name>O2</name>
        <dbReference type="ChEBI" id="CHEBI:15379"/>
    </ligand>
</feature>
<feature type="binding site" evidence="2">
    <location>
        <position position="291"/>
    </location>
    <ligand>
        <name>Cu cation</name>
        <dbReference type="ChEBI" id="CHEBI:23378"/>
        <label>B</label>
    </ligand>
</feature>
<feature type="binding site" evidence="2">
    <location>
        <position position="292"/>
    </location>
    <ligand>
        <name>Cu cation</name>
        <dbReference type="ChEBI" id="CHEBI:23378"/>
        <label>B</label>
    </ligand>
</feature>
<feature type="cross-link" description="1'-histidyl-3'-tyrosine (His-Tyr)" evidence="2">
    <location>
        <begin position="241"/>
        <end position="245"/>
    </location>
</feature>
<feature type="non-terminal residue">
    <location>
        <position position="337"/>
    </location>
</feature>
<protein>
    <recommendedName>
        <fullName>Cytochrome c oxidase subunit 1</fullName>
        <ecNumber>7.1.1.9</ecNumber>
    </recommendedName>
    <alternativeName>
        <fullName>Cytochrome c oxidase polypeptide I</fullName>
    </alternativeName>
</protein>
<keyword id="KW-0106">Calcium</keyword>
<keyword id="KW-0186">Copper</keyword>
<keyword id="KW-0249">Electron transport</keyword>
<keyword id="KW-0349">Heme</keyword>
<keyword id="KW-0408">Iron</keyword>
<keyword id="KW-0472">Membrane</keyword>
<keyword id="KW-0479">Metal-binding</keyword>
<keyword id="KW-0496">Mitochondrion</keyword>
<keyword id="KW-0999">Mitochondrion inner membrane</keyword>
<keyword id="KW-0679">Respiratory chain</keyword>
<keyword id="KW-0915">Sodium</keyword>
<keyword id="KW-1278">Translocase</keyword>
<keyword id="KW-0812">Transmembrane</keyword>
<keyword id="KW-1133">Transmembrane helix</keyword>
<keyword id="KW-0813">Transport</keyword>
<geneLocation type="mitochondrion"/>
<dbReference type="EC" id="7.1.1.9"/>
<dbReference type="EMBL" id="U76063">
    <property type="protein sequence ID" value="AAB61331.1"/>
    <property type="molecule type" value="Genomic_DNA"/>
</dbReference>
<dbReference type="SMR" id="O03554"/>
<dbReference type="UniPathway" id="UPA00705"/>
<dbReference type="GO" id="GO:0005743">
    <property type="term" value="C:mitochondrial inner membrane"/>
    <property type="evidence" value="ECO:0007669"/>
    <property type="project" value="UniProtKB-SubCell"/>
</dbReference>
<dbReference type="GO" id="GO:0045277">
    <property type="term" value="C:respiratory chain complex IV"/>
    <property type="evidence" value="ECO:0000250"/>
    <property type="project" value="UniProtKB"/>
</dbReference>
<dbReference type="GO" id="GO:0004129">
    <property type="term" value="F:cytochrome-c oxidase activity"/>
    <property type="evidence" value="ECO:0007669"/>
    <property type="project" value="UniProtKB-EC"/>
</dbReference>
<dbReference type="GO" id="GO:0020037">
    <property type="term" value="F:heme binding"/>
    <property type="evidence" value="ECO:0007669"/>
    <property type="project" value="InterPro"/>
</dbReference>
<dbReference type="GO" id="GO:0046872">
    <property type="term" value="F:metal ion binding"/>
    <property type="evidence" value="ECO:0007669"/>
    <property type="project" value="UniProtKB-KW"/>
</dbReference>
<dbReference type="GO" id="GO:0015990">
    <property type="term" value="P:electron transport coupled proton transport"/>
    <property type="evidence" value="ECO:0007669"/>
    <property type="project" value="TreeGrafter"/>
</dbReference>
<dbReference type="GO" id="GO:0006123">
    <property type="term" value="P:mitochondrial electron transport, cytochrome c to oxygen"/>
    <property type="evidence" value="ECO:0007669"/>
    <property type="project" value="TreeGrafter"/>
</dbReference>
<dbReference type="FunFam" id="1.20.210.10:FF:000013">
    <property type="entry name" value="Cytochrome c oxidase subunit 1"/>
    <property type="match status" value="1"/>
</dbReference>
<dbReference type="Gene3D" id="1.20.210.10">
    <property type="entry name" value="Cytochrome c oxidase-like, subunit I domain"/>
    <property type="match status" value="1"/>
</dbReference>
<dbReference type="InterPro" id="IPR023616">
    <property type="entry name" value="Cyt_c_oxase-like_su1_dom"/>
</dbReference>
<dbReference type="InterPro" id="IPR036927">
    <property type="entry name" value="Cyt_c_oxase-like_su1_sf"/>
</dbReference>
<dbReference type="InterPro" id="IPR000883">
    <property type="entry name" value="Cyt_C_Oxase_1"/>
</dbReference>
<dbReference type="InterPro" id="IPR023615">
    <property type="entry name" value="Cyt_c_Oxase_su1_BS"/>
</dbReference>
<dbReference type="PANTHER" id="PTHR10422">
    <property type="entry name" value="CYTOCHROME C OXIDASE SUBUNIT 1"/>
    <property type="match status" value="1"/>
</dbReference>
<dbReference type="PANTHER" id="PTHR10422:SF18">
    <property type="entry name" value="CYTOCHROME C OXIDASE SUBUNIT 1"/>
    <property type="match status" value="1"/>
</dbReference>
<dbReference type="Pfam" id="PF00115">
    <property type="entry name" value="COX1"/>
    <property type="match status" value="1"/>
</dbReference>
<dbReference type="PRINTS" id="PR01165">
    <property type="entry name" value="CYCOXIDASEI"/>
</dbReference>
<dbReference type="SUPFAM" id="SSF81442">
    <property type="entry name" value="Cytochrome c oxidase subunit I-like"/>
    <property type="match status" value="1"/>
</dbReference>
<dbReference type="PROSITE" id="PS50855">
    <property type="entry name" value="COX1"/>
    <property type="match status" value="1"/>
</dbReference>
<dbReference type="PROSITE" id="PS00077">
    <property type="entry name" value="COX1_CUB"/>
    <property type="match status" value="1"/>
</dbReference>
<accession>O03554</accession>
<proteinExistence type="inferred from homology"/>
<sequence length="337" mass="36806">MTFITRWLFSTNHKDIGTLYLIFGAWAGMVGTALSLLIRAELGQPGTLLGDDQIYNVVVTAHAFVMIFFMVMPVMIGGFGNWLVPLMIGAPDMAFPRMNNMSFWLLPPSFLLLLASSTVETGVGTGWTVYPPLASNLAHAGASVDLAIFSLHLAGVSSILGAINFITTAINMKPPALTQYQTPLFVWSVLITAILLLLSLPVLAAGITMLLTDRNLNTTFFDPAGGGDPILYQHLFWFFGHPEVYILILPGFGIISHVVAYYAGKKEPFGYMGMVWAMLSIGFLGFIVWAHHMFTVGMDVDTRAYFTSATMIIAIPTGIKVFSWLATLHGGTIKWDP</sequence>
<evidence type="ECO:0000250" key="1">
    <source>
        <dbReference type="UniProtKB" id="P00395"/>
    </source>
</evidence>
<evidence type="ECO:0000250" key="2">
    <source>
        <dbReference type="UniProtKB" id="P00396"/>
    </source>
</evidence>
<evidence type="ECO:0000250" key="3">
    <source>
        <dbReference type="UniProtKB" id="P00401"/>
    </source>
</evidence>
<evidence type="ECO:0000305" key="4"/>
<gene>
    <name type="primary">MT-CO1</name>
    <name type="synonym">COI</name>
    <name type="synonym">COXI</name>
    <name type="synonym">MTCO1</name>
</gene>
<organism>
    <name type="scientific">Tinamus major</name>
    <name type="common">Great tinamou</name>
    <name type="synonym">Tetrao major</name>
    <dbReference type="NCBI Taxonomy" id="30468"/>
    <lineage>
        <taxon>Eukaryota</taxon>
        <taxon>Metazoa</taxon>
        <taxon>Chordata</taxon>
        <taxon>Craniata</taxon>
        <taxon>Vertebrata</taxon>
        <taxon>Euteleostomi</taxon>
        <taxon>Archelosauria</taxon>
        <taxon>Archosauria</taxon>
        <taxon>Dinosauria</taxon>
        <taxon>Saurischia</taxon>
        <taxon>Theropoda</taxon>
        <taxon>Coelurosauria</taxon>
        <taxon>Aves</taxon>
        <taxon>Palaeognathae</taxon>
        <taxon>Tinamiformes</taxon>
        <taxon>Tinamidae</taxon>
        <taxon>Tinamus</taxon>
    </lineage>
</organism>
<comment type="function">
    <text evidence="3">Component of the cytochrome c oxidase, the last enzyme in the mitochondrial electron transport chain which drives oxidative phosphorylation. The respiratory chain contains 3 multisubunit complexes succinate dehydrogenase (complex II, CII), ubiquinol-cytochrome c oxidoreductase (cytochrome b-c1 complex, complex III, CIII) and cytochrome c oxidase (complex IV, CIV), that cooperate to transfer electrons derived from NADH and succinate to molecular oxygen, creating an electrochemical gradient over the inner membrane that drives transmembrane transport and the ATP synthase. Cytochrome c oxidase is the component of the respiratory chain that catalyzes the reduction of oxygen to water. Electrons originating from reduced cytochrome c in the intermembrane space (IMS) are transferred via the dinuclear copper A center (CU(A)) of subunit 2 and heme A of subunit 1 to the active site in subunit 1, a binuclear center (BNC) formed by heme A3 and copper B (CU(B)). The BNC reduces molecular oxygen to 2 water molecules using 4 electrons from cytochrome c in the IMS and 4 protons from the mitochondrial matrix.</text>
</comment>
<comment type="catalytic activity">
    <reaction evidence="3">
        <text>4 Fe(II)-[cytochrome c] + O2 + 8 H(+)(in) = 4 Fe(III)-[cytochrome c] + 2 H2O + 4 H(+)(out)</text>
        <dbReference type="Rhea" id="RHEA:11436"/>
        <dbReference type="Rhea" id="RHEA-COMP:10350"/>
        <dbReference type="Rhea" id="RHEA-COMP:14399"/>
        <dbReference type="ChEBI" id="CHEBI:15377"/>
        <dbReference type="ChEBI" id="CHEBI:15378"/>
        <dbReference type="ChEBI" id="CHEBI:15379"/>
        <dbReference type="ChEBI" id="CHEBI:29033"/>
        <dbReference type="ChEBI" id="CHEBI:29034"/>
        <dbReference type="EC" id="7.1.1.9"/>
    </reaction>
    <physiologicalReaction direction="left-to-right" evidence="3">
        <dbReference type="Rhea" id="RHEA:11437"/>
    </physiologicalReaction>
</comment>
<comment type="cofactor">
    <cofactor evidence="2">
        <name>heme</name>
        <dbReference type="ChEBI" id="CHEBI:30413"/>
    </cofactor>
    <text evidence="2">Binds 2 heme A groups non-covalently per subunit.</text>
</comment>
<comment type="cofactor">
    <cofactor evidence="2">
        <name>Cu cation</name>
        <dbReference type="ChEBI" id="CHEBI:23378"/>
    </cofactor>
    <text evidence="2">Binds a copper B center.</text>
</comment>
<comment type="pathway">
    <text evidence="3">Energy metabolism; oxidative phosphorylation.</text>
</comment>
<comment type="subunit">
    <text evidence="1 2">Component of the cytochrome c oxidase (complex IV, CIV), a multisubunit enzyme composed of 14 subunits. The complex is composed of a catalytic core of 3 subunits MT-CO1, MT-CO2 and MT-CO3, encoded in the mitochondrial DNA, and 11 supernumerary subunits COX4I, COX5A, COX5B, COX6A, COX6B, COX6C, COX7A, COX7B, COX7C, COX8 and NDUFA4, which are encoded in the nuclear genome. The complex exists as a monomer or a dimer and forms supercomplexes (SCs) in the inner mitochondrial membrane with NADH-ubiquinone oxidoreductase (complex I, CI) and ubiquinol-cytochrome c oxidoreductase (cytochrome b-c1 complex, complex III, CIII), resulting in different assemblies (supercomplex SCI(1)III(2)IV(1) and megacomplex MCI(2)III(2)IV(2)) (By similarity). As a newly synthesized protein, rapidly incorporates into a multi-subunit assembly intermediate in the inner membrane, called MITRAC (mitochondrial translation regulation assembly intermediate of cytochrome c oxidase) complex, whose core components are COA3/MITRAC12 and COX14. Within the MITRAC complex, interacts with COA3 and with SMIM20/MITRAC7; the interaction with SMIM20 stabilizes the newly synthesized MT-CO1 and prevents its premature turnover. Interacts with TMEM177 in a COX20-dependent manner (By similarity).</text>
</comment>
<comment type="subcellular location">
    <subcellularLocation>
        <location evidence="2">Mitochondrion inner membrane</location>
        <topology evidence="2">Multi-pass membrane protein</topology>
    </subcellularLocation>
</comment>
<comment type="similarity">
    <text evidence="4">Belongs to the heme-copper respiratory oxidase family.</text>
</comment>